<reference key="1">
    <citation type="journal article" date="2003" name="Science">
        <title>Human chromosome 7: DNA sequence and biology.</title>
        <authorList>
            <person name="Scherer S.W."/>
            <person name="Cheung J."/>
            <person name="MacDonald J.R."/>
            <person name="Osborne L.R."/>
            <person name="Nakabayashi K."/>
            <person name="Herbrick J.-A."/>
            <person name="Carson A.R."/>
            <person name="Parker-Katiraee L."/>
            <person name="Skaug J."/>
            <person name="Khaja R."/>
            <person name="Zhang J."/>
            <person name="Hudek A.K."/>
            <person name="Li M."/>
            <person name="Haddad M."/>
            <person name="Duggan G.E."/>
            <person name="Fernandez B.A."/>
            <person name="Kanematsu E."/>
            <person name="Gentles S."/>
            <person name="Christopoulos C.C."/>
            <person name="Choufani S."/>
            <person name="Kwasnicka D."/>
            <person name="Zheng X.H."/>
            <person name="Lai Z."/>
            <person name="Nusskern D.R."/>
            <person name="Zhang Q."/>
            <person name="Gu Z."/>
            <person name="Lu F."/>
            <person name="Zeesman S."/>
            <person name="Nowaczyk M.J."/>
            <person name="Teshima I."/>
            <person name="Chitayat D."/>
            <person name="Shuman C."/>
            <person name="Weksberg R."/>
            <person name="Zackai E.H."/>
            <person name="Grebe T.A."/>
            <person name="Cox S.R."/>
            <person name="Kirkpatrick S.J."/>
            <person name="Rahman N."/>
            <person name="Friedman J.M."/>
            <person name="Heng H.H.Q."/>
            <person name="Pelicci P.G."/>
            <person name="Lo-Coco F."/>
            <person name="Belloni E."/>
            <person name="Shaffer L.G."/>
            <person name="Pober B."/>
            <person name="Morton C.C."/>
            <person name="Gusella J.F."/>
            <person name="Bruns G.A.P."/>
            <person name="Korf B.R."/>
            <person name="Quade B.J."/>
            <person name="Ligon A.H."/>
            <person name="Ferguson H."/>
            <person name="Higgins A.W."/>
            <person name="Leach N.T."/>
            <person name="Herrick S.R."/>
            <person name="Lemyre E."/>
            <person name="Farra C.G."/>
            <person name="Kim H.-G."/>
            <person name="Summers A.M."/>
            <person name="Gripp K.W."/>
            <person name="Roberts W."/>
            <person name="Szatmari P."/>
            <person name="Winsor E.J.T."/>
            <person name="Grzeschik K.-H."/>
            <person name="Teebi A."/>
            <person name="Minassian B.A."/>
            <person name="Kere J."/>
            <person name="Armengol L."/>
            <person name="Pujana M.A."/>
            <person name="Estivill X."/>
            <person name="Wilson M.D."/>
            <person name="Koop B.F."/>
            <person name="Tosi S."/>
            <person name="Moore G.E."/>
            <person name="Boright A.P."/>
            <person name="Zlotorynski E."/>
            <person name="Kerem B."/>
            <person name="Kroisel P.M."/>
            <person name="Petek E."/>
            <person name="Oscier D.G."/>
            <person name="Mould S.J."/>
            <person name="Doehner H."/>
            <person name="Doehner K."/>
            <person name="Rommens J.M."/>
            <person name="Vincent J.B."/>
            <person name="Venter J.C."/>
            <person name="Li P.W."/>
            <person name="Mural R.J."/>
            <person name="Adams M.D."/>
            <person name="Tsui L.-C."/>
        </authorList>
    </citation>
    <scope>NUCLEOTIDE SEQUENCE [LARGE SCALE GENOMIC DNA]</scope>
</reference>
<reference key="2">
    <citation type="submission" date="2005-09" db="EMBL/GenBank/DDBJ databases">
        <authorList>
            <person name="Mural R.J."/>
            <person name="Istrail S."/>
            <person name="Sutton G.G."/>
            <person name="Florea L."/>
            <person name="Halpern A.L."/>
            <person name="Mobarry C.M."/>
            <person name="Lippert R."/>
            <person name="Walenz B."/>
            <person name="Shatkay H."/>
            <person name="Dew I."/>
            <person name="Miller J.R."/>
            <person name="Flanigan M.J."/>
            <person name="Edwards N.J."/>
            <person name="Bolanos R."/>
            <person name="Fasulo D."/>
            <person name="Halldorsson B.V."/>
            <person name="Hannenhalli S."/>
            <person name="Turner R."/>
            <person name="Yooseph S."/>
            <person name="Lu F."/>
            <person name="Nusskern D.R."/>
            <person name="Shue B.C."/>
            <person name="Zheng X.H."/>
            <person name="Zhong F."/>
            <person name="Delcher A.L."/>
            <person name="Huson D.H."/>
            <person name="Kravitz S.A."/>
            <person name="Mouchard L."/>
            <person name="Reinert K."/>
            <person name="Remington K.A."/>
            <person name="Clark A.G."/>
            <person name="Waterman M.S."/>
            <person name="Eichler E.E."/>
            <person name="Adams M.D."/>
            <person name="Hunkapiller M.W."/>
            <person name="Myers E.W."/>
            <person name="Venter J.C."/>
        </authorList>
    </citation>
    <scope>NUCLEOTIDE SEQUENCE [LARGE SCALE GENOMIC DNA]</scope>
</reference>
<reference key="3">
    <citation type="journal article" date="2004" name="Genome Res.">
        <title>The status, quality, and expansion of the NIH full-length cDNA project: the Mammalian Gene Collection (MGC).</title>
        <authorList>
            <consortium name="The MGC Project Team"/>
        </authorList>
    </citation>
    <scope>NUCLEOTIDE SEQUENCE [LARGE SCALE MRNA]</scope>
    <source>
        <tissue>Placenta</tissue>
    </source>
</reference>
<reference key="4">
    <citation type="journal article" date="1997" name="J. Biol. Chem.">
        <title>Structure of cDNAs encoding human eukaryotic initiation factor 3 subunits. Possible roles in RNA binding and macromolecular assembly.</title>
        <authorList>
            <person name="Asano K."/>
            <person name="Vornlocher H.-P."/>
            <person name="Richter-Cook N.J."/>
            <person name="Merrick W.C."/>
            <person name="Hinnebusch A.G."/>
            <person name="Hershey J.W.B."/>
        </authorList>
    </citation>
    <scope>NUCLEOTIDE SEQUENCE [MRNA] OF 22-327</scope>
</reference>
<reference key="5">
    <citation type="journal article" date="1998" name="FASEB J.">
        <title>A novel protein complex involved in signal transduction possessing similarities to 26S proteasome subunits.</title>
        <authorList>
            <person name="Seeger M."/>
            <person name="Kraft R."/>
            <person name="Ferrell K."/>
            <person name="Bech-Otschir D."/>
            <person name="Dumdey R."/>
            <person name="Schade R."/>
            <person name="Gordon C."/>
            <person name="Naumann M."/>
            <person name="Dubiel W."/>
        </authorList>
    </citation>
    <scope>PARTIAL PROTEIN SEQUENCE</scope>
    <scope>FUNCTION</scope>
    <scope>SUBCELLULAR LOCATION</scope>
</reference>
<reference key="6">
    <citation type="journal article" date="1994" name="J. Biol. Chem.">
        <title>Biochemical mechanism of HIV-I Vpr function. Specific interaction with a cellular protein.</title>
        <authorList>
            <person name="Zhao L.-J."/>
            <person name="Mukherjee S."/>
            <person name="Narayan O."/>
        </authorList>
    </citation>
    <scope>INTERACTION WITH HIV-1 VPR (MICROBIAL INFECTION)</scope>
</reference>
<reference key="7">
    <citation type="journal article" date="1998" name="Proc. Natl. Acad. Sci. U.S.A.">
        <title>HIV-1 Vpr interacts with a human 34-kDa mov34 homologue, a cellular factor linked to the G2/M phase transition of the mammalian cell cycle.</title>
        <authorList>
            <person name="Mahalingam S."/>
            <person name="Ayyavoo V."/>
            <person name="Patel M."/>
            <person name="Kieber-Emmons T."/>
            <person name="Kao G.D."/>
            <person name="Muschel R.J."/>
            <person name="Weiner D.B."/>
        </authorList>
    </citation>
    <scope>SUBCELLULAR LOCATION (MICROBIAL INFECTION)</scope>
    <scope>TISSUE SPECIFICITY</scope>
    <scope>INTERACTION WITH HUMAN VPR (MICROBIAL INFECTION)</scope>
</reference>
<reference key="8">
    <citation type="journal article" date="2001" name="EMBO J.">
        <title>COP9 signalosome-specific phosphorylation targets p53 to degradation by the ubiquitin system.</title>
        <authorList>
            <person name="Bech-Otschir D."/>
            <person name="Kraft R."/>
            <person name="Huang X."/>
            <person name="Henklein P."/>
            <person name="Kapelari B."/>
            <person name="Pollmann C."/>
            <person name="Dubiel W."/>
        </authorList>
    </citation>
    <scope>FUNCTION</scope>
</reference>
<reference key="9">
    <citation type="journal article" date="2001" name="Science">
        <title>Promotion of NEDD-CUL1 conjugate cleavage by COP9 signalosome.</title>
        <authorList>
            <person name="Lyapina S."/>
            <person name="Cope G."/>
            <person name="Shevchenko A."/>
            <person name="Serino G."/>
            <person name="Tsuge T."/>
            <person name="Zhou C."/>
            <person name="Wolf D.A."/>
            <person name="Wei N."/>
            <person name="Shevchenko A."/>
            <person name="Deshaies R.J."/>
        </authorList>
    </citation>
    <scope>FUNCTION</scope>
    <scope>COMPOSITION OF THE CSN COMPLEX</scope>
    <scope>INTERACTION WITH RBX1</scope>
</reference>
<reference key="10">
    <citation type="journal article" date="2002" name="FEBS Lett.">
        <title>Association of the mammalian proto-oncoprotein Int-6 with the three protein complexes eIF3, COP9 signalosome and 26S proteasome.</title>
        <authorList>
            <person name="Hoareau Alves K."/>
            <person name="Bochard V."/>
            <person name="Rety S."/>
            <person name="Jalinot P."/>
        </authorList>
    </citation>
    <scope>INTERACTION WITH EIF3S6</scope>
</reference>
<reference key="11">
    <citation type="journal article" date="2002" name="J. Biol. Chem.">
        <title>Carboxyl terminus of hVIP/mov34 is critical for HIV-1-Vpr interaction and glucocorticoid-mediated signaling.</title>
        <authorList>
            <person name="Ramanathan M.P."/>
            <person name="Curley E. III"/>
            <person name="Su M."/>
            <person name="Chambers J.A."/>
            <person name="Weiner D.B."/>
        </authorList>
    </citation>
    <scope>INTERACTION WITH VPR (MICROBIAL INFECTION)</scope>
</reference>
<reference key="12">
    <citation type="journal article" date="2003" name="Cell">
        <title>The ubiquitin ligase activity in the DDB2 and CSA complexes is differentially regulated by the COP9 signalosome in response to DNA damage.</title>
        <authorList>
            <person name="Groisman R."/>
            <person name="Polanowska J."/>
            <person name="Kuraoka I."/>
            <person name="Sawada J."/>
            <person name="Saijo M."/>
            <person name="Drapkin R."/>
            <person name="Kisselev A.F."/>
            <person name="Tanaka K."/>
            <person name="Nakatani Y."/>
        </authorList>
    </citation>
    <scope>FUNCTION</scope>
</reference>
<reference key="13">
    <citation type="journal article" date="2003" name="EMBO J.">
        <title>Protein kinase CK2 and protein kinase D are associated with the COP9 signalosome.</title>
        <authorList>
            <person name="Uhle S."/>
            <person name="Medalia O."/>
            <person name="Waldron R."/>
            <person name="Dumdey R."/>
            <person name="Henklein P."/>
            <person name="Bech-Otschir D."/>
            <person name="Huang X."/>
            <person name="Berse M."/>
            <person name="Sperling J."/>
            <person name="Schade R."/>
            <person name="Dubiel W."/>
        </authorList>
    </citation>
    <scope>FUNCTION</scope>
</reference>
<reference key="14">
    <citation type="journal article" date="2008" name="J. Proteome Res.">
        <title>Characterization of the human COP9 signalosome complex using affinity purification and mass spectrometry.</title>
        <authorList>
            <person name="Fang L."/>
            <person name="Wang X."/>
            <person name="Yamoah K."/>
            <person name="Chen P.L."/>
            <person name="Pan Z.Q."/>
            <person name="Huang L."/>
        </authorList>
    </citation>
    <scope>IDENTIFICATION IN THE CSN COMPLEX</scope>
</reference>
<reference key="15">
    <citation type="journal article" date="2011" name="BMC Syst. Biol.">
        <title>Initial characterization of the human central proteome.</title>
        <authorList>
            <person name="Burkard T.R."/>
            <person name="Planyavsky M."/>
            <person name="Kaupe I."/>
            <person name="Breitwieser F.P."/>
            <person name="Buerckstuemmer T."/>
            <person name="Bennett K.L."/>
            <person name="Superti-Furga G."/>
            <person name="Colinge J."/>
        </authorList>
    </citation>
    <scope>IDENTIFICATION BY MASS SPECTROMETRY [LARGE SCALE ANALYSIS]</scope>
</reference>
<reference key="16">
    <citation type="journal article" date="2011" name="Oncogene">
        <title>COP9 signalosome subunit 6 stabilizes COP1, which functions as an E3 ubiquitin ligase for 14-3-3sigma.</title>
        <authorList>
            <person name="Choi H.H."/>
            <person name="Gully C."/>
            <person name="Su C.H."/>
            <person name="Velazquez-Torres G."/>
            <person name="Chou P.C."/>
            <person name="Tseng C."/>
            <person name="Zhao R."/>
            <person name="Phan L."/>
            <person name="Shaiken T."/>
            <person name="Chen J."/>
            <person name="Yeung S.C."/>
            <person name="Lee M.H."/>
        </authorList>
    </citation>
    <scope>FUNCTION</scope>
    <scope>INTERACTION WITH COP1 AND SFN</scope>
</reference>
<reference key="17">
    <citation type="journal article" date="2014" name="J. Proteomics">
        <title>An enzyme assisted RP-RPLC approach for in-depth analysis of human liver phosphoproteome.</title>
        <authorList>
            <person name="Bian Y."/>
            <person name="Song C."/>
            <person name="Cheng K."/>
            <person name="Dong M."/>
            <person name="Wang F."/>
            <person name="Huang J."/>
            <person name="Sun D."/>
            <person name="Wang L."/>
            <person name="Ye M."/>
            <person name="Zou H."/>
        </authorList>
    </citation>
    <scope>IDENTIFICATION BY MASS SPECTROMETRY [LARGE SCALE ANALYSIS]</scope>
    <source>
        <tissue>Liver</tissue>
    </source>
</reference>
<reference key="18">
    <citation type="journal article" date="2015" name="Cell Rep.">
        <title>CSNAP is a stoichiometric subunit of the COP9 signalosome.</title>
        <authorList>
            <person name="Rozen S."/>
            <person name="Fuezesi-Levi M.G."/>
            <person name="Ben-Nissan G."/>
            <person name="Mizrachi L."/>
            <person name="Gabashvili A."/>
            <person name="Levin Y."/>
            <person name="Ben-Dor S."/>
            <person name="Eisenstein M."/>
            <person name="Sharon M."/>
        </authorList>
    </citation>
    <scope>COMPOSITION OF THE CSN COMPLEX</scope>
    <scope>INTERACTION WITH COPS9</scope>
</reference>
<reference key="19">
    <citation type="journal article" date="2015" name="PLoS ONE">
        <title>Identification of Novel Proteins Co-Purifying with Cockayne Syndrome Group B (CSB) Reveals Potential Roles for CSB in RNA Metabolism and Chromatin Dynamics.</title>
        <authorList>
            <person name="Nicolai S."/>
            <person name="Filippi S."/>
            <person name="Caputo M."/>
            <person name="Cipak L."/>
            <person name="Gregan J."/>
            <person name="Ammerer G."/>
            <person name="Frontini M."/>
            <person name="Willems D."/>
            <person name="Prantera G."/>
            <person name="Balajee A.S."/>
            <person name="Proietti-De-Santis L."/>
        </authorList>
    </citation>
    <scope>INTERACTION WITH ERCC6</scope>
</reference>
<comment type="function">
    <text evidence="2 3 6 7 9 14">Component of the COP9 signalosome complex (CSN), a complex involved in various cellular and developmental processes. The CSN complex is an essential regulator of the ubiquitin (Ubl) conjugation pathway by mediating the deneddylation of the cullin subunits of SCF-type E3 ligase complexes, leading to decrease the Ubl ligase activity of SCF-type complexes such as SCF, CSA or DDB2. The complex is also involved in phosphorylation of p53/TP53, c-jun/JUN, IkappaBalpha/NFKBIA, ITPK1 and IRF8, possibly via its association with CK2 and PKD kinases. CSN-dependent phosphorylation of TP53 and JUN promotes and protects degradation by the Ubl system, respectively. Has some glucocorticoid receptor-responsive activity. Stabilizes COP1 through reducing COP1 auto-ubiquitination and decelerating COP1 turnover rate, hence regulates the ubiquitination of COP1 targets.</text>
</comment>
<comment type="subunit">
    <text evidence="3 4 8 9 10 11">Component of the CSN complex, composed of COPS1/GPS1, COPS2, COPS3, COPS4, COPS5, COPS6, COPS7 (COPS7A or COPS7B), COPS8 and COPS9 isoform 1 (PubMed:18850735, PubMed:26456823). In the complex, it probably interacts directly with COPS2, COPS4, COPS5, COPS7 (COPS7A or COPS7B) and COPS9 isoform 1 (PubMed:11337588, PubMed:26456823). Interacts with the translation initiation factor EIF3S6 (PubMed:12220626). Interacts weakly with RBX1 (PubMed:11337588). Directly interacts with COP1 and 14-3-3 protein sigma/SFN (PubMed:21625211). Interacts with ERCC6 (PubMed:26030138).</text>
</comment>
<comment type="subunit">
    <text evidence="5 12 13">(Microbial infection) Interacts with the HIV-1 protein Vpr.</text>
</comment>
<comment type="interaction">
    <interactant intactId="EBI-486838">
        <id>Q7L5N1</id>
    </interactant>
    <interactant intactId="EBI-10229433">
        <id>Q13515</id>
        <label>BFSP2</label>
    </interactant>
    <organismsDiffer>false</organismsDiffer>
    <experiments>3</experiments>
</comment>
<comment type="interaction">
    <interactant intactId="EBI-486838">
        <id>Q7L5N1</id>
    </interactant>
    <interactant intactId="EBI-710091">
        <id>Q9BX70</id>
        <label>BTBD2</label>
    </interactant>
    <organismsDiffer>false</organismsDiffer>
    <experiments>9</experiments>
</comment>
<comment type="interaction">
    <interactant intactId="EBI-486838">
        <id>Q7L5N1</id>
    </interactant>
    <interactant intactId="EBI-307461">
        <id>Q9Y297</id>
        <label>BTRC</label>
    </interactant>
    <organismsDiffer>false</organismsDiffer>
    <experiments>2</experiments>
</comment>
<comment type="interaction">
    <interactant intactId="EBI-486838">
        <id>Q7L5N1</id>
    </interactant>
    <interactant intactId="EBI-12013534">
        <id>Q6UXH8-3</id>
        <label>CCBE1</label>
    </interactant>
    <organismsDiffer>false</organismsDiffer>
    <experiments>3</experiments>
</comment>
<comment type="interaction">
    <interactant intactId="EBI-486838">
        <id>Q7L5N1</id>
    </interactant>
    <interactant intactId="EBI-1176214">
        <id>Q8NHY2</id>
        <label>COP1</label>
    </interactant>
    <organismsDiffer>false</organismsDiffer>
    <experiments>3</experiments>
</comment>
<comment type="interaction">
    <interactant intactId="EBI-486838">
        <id>Q7L5N1</id>
    </interactant>
    <interactant intactId="EBI-350590">
        <id>Q9UNS2</id>
        <label>COPS3</label>
    </interactant>
    <organismsDiffer>false</organismsDiffer>
    <experiments>25</experiments>
</comment>
<comment type="interaction">
    <interactant intactId="EBI-486838">
        <id>Q7L5N1</id>
    </interactant>
    <interactant intactId="EBI-742413">
        <id>Q9BT78</id>
        <label>COPS4</label>
    </interactant>
    <organismsDiffer>false</organismsDiffer>
    <experiments>20</experiments>
</comment>
<comment type="interaction">
    <interactant intactId="EBI-486838">
        <id>Q7L5N1</id>
    </interactant>
    <interactant intactId="EBI-594661">
        <id>Q92905</id>
        <label>COPS5</label>
    </interactant>
    <organismsDiffer>false</organismsDiffer>
    <experiments>26</experiments>
</comment>
<comment type="interaction">
    <interactant intactId="EBI-486838">
        <id>Q7L5N1</id>
    </interactant>
    <interactant intactId="EBI-959949">
        <id>P28482</id>
        <label>MAPK1</label>
    </interactant>
    <organismsDiffer>false</organismsDiffer>
    <experiments>2</experiments>
</comment>
<comment type="interaction">
    <interactant intactId="EBI-486838">
        <id>Q7L5N1</id>
    </interactant>
    <interactant intactId="EBI-476295">
        <id>P31947</id>
        <label>SFN</label>
    </interactant>
    <organismsDiffer>false</organismsDiffer>
    <experiments>7</experiments>
</comment>
<comment type="interaction">
    <interactant intactId="EBI-486838">
        <id>Q7L5N1</id>
    </interactant>
    <interactant intactId="EBI-79084">
        <id>Q92529</id>
        <label>SHC3</label>
    </interactant>
    <organismsDiffer>false</organismsDiffer>
    <experiments>3</experiments>
</comment>
<comment type="interaction">
    <interactant intactId="EBI-486838">
        <id>Q7L5N1</id>
    </interactant>
    <interactant intactId="EBI-739895">
        <id>Q8N6Y0</id>
        <label>USHBP1</label>
    </interactant>
    <organismsDiffer>false</organismsDiffer>
    <experiments>3</experiments>
</comment>
<comment type="interaction">
    <interactant intactId="EBI-486838">
        <id>Q7L5N1</id>
    </interactant>
    <interactant intactId="EBI-10237226">
        <id>Q15911-2</id>
        <label>ZFHX3</label>
    </interactant>
    <organismsDiffer>false</organismsDiffer>
    <experiments>3</experiments>
</comment>
<comment type="subcellular location">
    <subcellularLocation>
        <location evidence="14">Nucleus</location>
    </subcellularLocation>
    <subcellularLocation>
        <location evidence="14">Cytoplasm</location>
    </subcellularLocation>
</comment>
<comment type="subcellular location">
    <subcellularLocation>
        <location evidence="13">Cytoplasm</location>
        <location evidence="13">Perinuclear region</location>
    </subcellularLocation>
    <text evidence="13">(Microbial infection) The interaction with HIV-1 Vpr protein possibly leads its translocation to a perinuclear region.</text>
</comment>
<comment type="tissue specificity">
    <text evidence="13">Widely expressed.</text>
</comment>
<comment type="similarity">
    <text evidence="15">Belongs to the peptidase M67A family. CSN6 subfamily.</text>
</comment>
<comment type="caution">
    <text evidence="15">Although related to the peptidase M67A family, it lacks the JAMM motif that probably constitutes the catalytic center and therefore it probably does not have a protease activity.</text>
</comment>
<comment type="sequence caution" evidence="15">
    <conflict type="erroneous initiation">
        <sequence resource="EMBL-CDS" id="AAD03469"/>
    </conflict>
    <text>Truncated N-terminus.</text>
</comment>
<proteinExistence type="evidence at protein level"/>
<name>CSN6_HUMAN</name>
<organism>
    <name type="scientific">Homo sapiens</name>
    <name type="common">Human</name>
    <dbReference type="NCBI Taxonomy" id="9606"/>
    <lineage>
        <taxon>Eukaryota</taxon>
        <taxon>Metazoa</taxon>
        <taxon>Chordata</taxon>
        <taxon>Craniata</taxon>
        <taxon>Vertebrata</taxon>
        <taxon>Euteleostomi</taxon>
        <taxon>Mammalia</taxon>
        <taxon>Eutheria</taxon>
        <taxon>Euarchontoglires</taxon>
        <taxon>Primates</taxon>
        <taxon>Haplorrhini</taxon>
        <taxon>Catarrhini</taxon>
        <taxon>Hominidae</taxon>
        <taxon>Homo</taxon>
    </lineage>
</organism>
<evidence type="ECO:0000255" key="1">
    <source>
        <dbReference type="PROSITE-ProRule" id="PRU01182"/>
    </source>
</evidence>
<evidence type="ECO:0000269" key="2">
    <source>
    </source>
</evidence>
<evidence type="ECO:0000269" key="3">
    <source>
    </source>
</evidence>
<evidence type="ECO:0000269" key="4">
    <source>
    </source>
</evidence>
<evidence type="ECO:0000269" key="5">
    <source>
    </source>
</evidence>
<evidence type="ECO:0000269" key="6">
    <source>
    </source>
</evidence>
<evidence type="ECO:0000269" key="7">
    <source>
    </source>
</evidence>
<evidence type="ECO:0000269" key="8">
    <source>
    </source>
</evidence>
<evidence type="ECO:0000269" key="9">
    <source>
    </source>
</evidence>
<evidence type="ECO:0000269" key="10">
    <source>
    </source>
</evidence>
<evidence type="ECO:0000269" key="11">
    <source>
    </source>
</evidence>
<evidence type="ECO:0000269" key="12">
    <source>
    </source>
</evidence>
<evidence type="ECO:0000269" key="13">
    <source>
    </source>
</evidence>
<evidence type="ECO:0000269" key="14">
    <source>
    </source>
</evidence>
<evidence type="ECO:0000305" key="15"/>
<evidence type="ECO:0007829" key="16">
    <source>
        <dbReference type="PDB" id="4QFT"/>
    </source>
</evidence>
<evidence type="ECO:0007829" key="17">
    <source>
        <dbReference type="PDB" id="4R14"/>
    </source>
</evidence>
<feature type="chain" id="PRO_0000194860" description="COP9 signalosome complex subunit 6">
    <location>
        <begin position="1"/>
        <end position="327"/>
    </location>
</feature>
<feature type="domain" description="MPN" evidence="1">
    <location>
        <begin position="41"/>
        <end position="174"/>
    </location>
</feature>
<feature type="region of interest" description="Interaction with Vpr">
    <location>
        <begin position="211"/>
        <end position="327"/>
    </location>
</feature>
<feature type="strand" evidence="16">
    <location>
        <begin position="40"/>
        <end position="43"/>
    </location>
</feature>
<feature type="helix" evidence="16">
    <location>
        <begin position="45"/>
        <end position="62"/>
    </location>
</feature>
<feature type="strand" evidence="16">
    <location>
        <begin position="69"/>
        <end position="77"/>
    </location>
</feature>
<feature type="strand" evidence="16">
    <location>
        <begin position="80"/>
        <end position="88"/>
    </location>
</feature>
<feature type="strand" evidence="16">
    <location>
        <begin position="91"/>
        <end position="94"/>
    </location>
</feature>
<feature type="strand" evidence="16">
    <location>
        <begin position="97"/>
        <end position="100"/>
    </location>
</feature>
<feature type="helix" evidence="16">
    <location>
        <begin position="102"/>
        <end position="115"/>
    </location>
</feature>
<feature type="strand" evidence="16">
    <location>
        <begin position="120"/>
        <end position="130"/>
    </location>
</feature>
<feature type="helix" evidence="16">
    <location>
        <begin position="133"/>
        <end position="142"/>
    </location>
</feature>
<feature type="turn" evidence="16">
    <location>
        <begin position="143"/>
        <end position="145"/>
    </location>
</feature>
<feature type="strand" evidence="16">
    <location>
        <begin position="146"/>
        <end position="148"/>
    </location>
</feature>
<feature type="strand" evidence="16">
    <location>
        <begin position="150"/>
        <end position="154"/>
    </location>
</feature>
<feature type="helix" evidence="17">
    <location>
        <begin position="160"/>
        <end position="162"/>
    </location>
</feature>
<feature type="strand" evidence="16">
    <location>
        <begin position="165"/>
        <end position="186"/>
    </location>
</feature>
<feature type="helix" evidence="16">
    <location>
        <begin position="200"/>
        <end position="207"/>
    </location>
</feature>
<keyword id="KW-0002">3D-structure</keyword>
<keyword id="KW-0963">Cytoplasm</keyword>
<keyword id="KW-0903">Direct protein sequencing</keyword>
<keyword id="KW-0945">Host-virus interaction</keyword>
<keyword id="KW-0539">Nucleus</keyword>
<keyword id="KW-1267">Proteomics identification</keyword>
<keyword id="KW-1185">Reference proteome</keyword>
<keyword id="KW-0736">Signalosome</keyword>
<dbReference type="EMBL" id="CH236956">
    <property type="protein sequence ID" value="EAL23857.1"/>
    <property type="molecule type" value="Genomic_DNA"/>
</dbReference>
<dbReference type="EMBL" id="CH471091">
    <property type="protein sequence ID" value="EAW76601.1"/>
    <property type="molecule type" value="Genomic_DNA"/>
</dbReference>
<dbReference type="EMBL" id="BC002520">
    <property type="protein sequence ID" value="AAH02520.2"/>
    <property type="molecule type" value="mRNA"/>
</dbReference>
<dbReference type="EMBL" id="U70735">
    <property type="protein sequence ID" value="AAD03469.1"/>
    <property type="status" value="ALT_INIT"/>
    <property type="molecule type" value="mRNA"/>
</dbReference>
<dbReference type="CCDS" id="CCDS5682.1"/>
<dbReference type="RefSeq" id="NP_006824.2">
    <property type="nucleotide sequence ID" value="NM_006833.4"/>
</dbReference>
<dbReference type="PDB" id="4D10">
    <property type="method" value="X-ray"/>
    <property type="resolution" value="3.80 A"/>
    <property type="chains" value="F/N=1-327"/>
</dbReference>
<dbReference type="PDB" id="4D18">
    <property type="method" value="X-ray"/>
    <property type="resolution" value="4.08 A"/>
    <property type="chains" value="F/N=1-327"/>
</dbReference>
<dbReference type="PDB" id="4QFT">
    <property type="method" value="X-ray"/>
    <property type="resolution" value="1.76 A"/>
    <property type="chains" value="A=31-211"/>
</dbReference>
<dbReference type="PDB" id="4R14">
    <property type="method" value="X-ray"/>
    <property type="resolution" value="2.60 A"/>
    <property type="chains" value="A/B=38-210"/>
</dbReference>
<dbReference type="PDB" id="4WSN">
    <property type="method" value="X-ray"/>
    <property type="resolution" value="5.50 A"/>
    <property type="chains" value="F/N/V/d/l/t=1-327"/>
</dbReference>
<dbReference type="PDB" id="6R6H">
    <property type="method" value="EM"/>
    <property type="resolution" value="8.40 A"/>
    <property type="chains" value="F=20-327"/>
</dbReference>
<dbReference type="PDB" id="6R7F">
    <property type="method" value="EM"/>
    <property type="resolution" value="8.20 A"/>
    <property type="chains" value="F=29-316"/>
</dbReference>
<dbReference type="PDB" id="6R7H">
    <property type="method" value="EM"/>
    <property type="resolution" value="8.80 A"/>
    <property type="chains" value="F=29-316"/>
</dbReference>
<dbReference type="PDB" id="6R7I">
    <property type="method" value="EM"/>
    <property type="resolution" value="5.90 A"/>
    <property type="chains" value="F=1-327"/>
</dbReference>
<dbReference type="PDB" id="8H38">
    <property type="method" value="EM"/>
    <property type="resolution" value="4.25 A"/>
    <property type="chains" value="F=1-327"/>
</dbReference>
<dbReference type="PDB" id="8H3A">
    <property type="method" value="EM"/>
    <property type="resolution" value="7.51 A"/>
    <property type="chains" value="F=1-327"/>
</dbReference>
<dbReference type="PDB" id="8H3F">
    <property type="method" value="EM"/>
    <property type="resolution" value="6.73 A"/>
    <property type="chains" value="F=1-327"/>
</dbReference>
<dbReference type="PDBsum" id="4D10"/>
<dbReference type="PDBsum" id="4D18"/>
<dbReference type="PDBsum" id="4QFT"/>
<dbReference type="PDBsum" id="4R14"/>
<dbReference type="PDBsum" id="4WSN"/>
<dbReference type="PDBsum" id="6R6H"/>
<dbReference type="PDBsum" id="6R7F"/>
<dbReference type="PDBsum" id="6R7H"/>
<dbReference type="PDBsum" id="6R7I"/>
<dbReference type="PDBsum" id="8H38"/>
<dbReference type="PDBsum" id="8H3A"/>
<dbReference type="PDBsum" id="8H3F"/>
<dbReference type="EMDB" id="EMD-3313"/>
<dbReference type="EMDB" id="EMD-3314"/>
<dbReference type="EMDB" id="EMD-3315"/>
<dbReference type="EMDB" id="EMD-3316"/>
<dbReference type="EMDB" id="EMD-3317"/>
<dbReference type="EMDB" id="EMD-3401"/>
<dbReference type="EMDB" id="EMD-34455"/>
<dbReference type="EMDB" id="EMD-34462"/>
<dbReference type="EMDB" id="EMD-34467"/>
<dbReference type="EMDB" id="EMD-4736"/>
<dbReference type="EMDB" id="EMD-4739"/>
<dbReference type="EMDB" id="EMD-4741"/>
<dbReference type="EMDB" id="EMD-4742"/>
<dbReference type="SMR" id="Q7L5N1"/>
<dbReference type="BioGRID" id="116176">
    <property type="interactions" value="410"/>
</dbReference>
<dbReference type="ComplexPortal" id="CPX-1870">
    <property type="entry name" value="COP9 signalosome variant 1"/>
</dbReference>
<dbReference type="ComplexPortal" id="CPX-1871">
    <property type="entry name" value="COP9 signalosome variant 2"/>
</dbReference>
<dbReference type="CORUM" id="Q7L5N1"/>
<dbReference type="DIP" id="DIP-32655N"/>
<dbReference type="FunCoup" id="Q7L5N1">
    <property type="interactions" value="3692"/>
</dbReference>
<dbReference type="IntAct" id="Q7L5N1">
    <property type="interactions" value="321"/>
</dbReference>
<dbReference type="MINT" id="Q7L5N1"/>
<dbReference type="STRING" id="9606.ENSP00000304102"/>
<dbReference type="MEROPS" id="M67.972"/>
<dbReference type="GlyGen" id="Q7L5N1">
    <property type="glycosylation" value="1 site, 1 O-linked glycan (1 site)"/>
</dbReference>
<dbReference type="iPTMnet" id="Q7L5N1"/>
<dbReference type="PhosphoSitePlus" id="Q7L5N1"/>
<dbReference type="BioMuta" id="COPS6"/>
<dbReference type="DMDM" id="55976470"/>
<dbReference type="jPOST" id="Q7L5N1"/>
<dbReference type="MassIVE" id="Q7L5N1"/>
<dbReference type="PaxDb" id="9606-ENSP00000304102"/>
<dbReference type="PeptideAtlas" id="Q7L5N1"/>
<dbReference type="ProteomicsDB" id="68811"/>
<dbReference type="Pumba" id="Q7L5N1"/>
<dbReference type="Antibodypedia" id="30510">
    <property type="antibodies" value="218 antibodies from 25 providers"/>
</dbReference>
<dbReference type="DNASU" id="10980"/>
<dbReference type="Ensembl" id="ENST00000303904.8">
    <property type="protein sequence ID" value="ENSP00000304102.3"/>
    <property type="gene ID" value="ENSG00000168090.10"/>
</dbReference>
<dbReference type="GeneID" id="10980"/>
<dbReference type="KEGG" id="hsa:10980"/>
<dbReference type="MANE-Select" id="ENST00000303904.8">
    <property type="protein sequence ID" value="ENSP00000304102.3"/>
    <property type="RefSeq nucleotide sequence ID" value="NM_006833.5"/>
    <property type="RefSeq protein sequence ID" value="NP_006824.2"/>
</dbReference>
<dbReference type="UCSC" id="uc003usu.4">
    <property type="organism name" value="human"/>
</dbReference>
<dbReference type="AGR" id="HGNC:21749"/>
<dbReference type="CTD" id="10980"/>
<dbReference type="DisGeNET" id="10980"/>
<dbReference type="GeneCards" id="COPS6"/>
<dbReference type="HGNC" id="HGNC:21749">
    <property type="gene designation" value="COPS6"/>
</dbReference>
<dbReference type="HPA" id="ENSG00000168090">
    <property type="expression patterns" value="Low tissue specificity"/>
</dbReference>
<dbReference type="MalaCards" id="COPS6"/>
<dbReference type="MIM" id="614729">
    <property type="type" value="gene"/>
</dbReference>
<dbReference type="neXtProt" id="NX_Q7L5N1"/>
<dbReference type="OpenTargets" id="ENSG00000168090"/>
<dbReference type="PharmGKB" id="PA134919933"/>
<dbReference type="VEuPathDB" id="HostDB:ENSG00000168090"/>
<dbReference type="eggNOG" id="KOG3050">
    <property type="taxonomic scope" value="Eukaryota"/>
</dbReference>
<dbReference type="GeneTree" id="ENSGT00950000183073"/>
<dbReference type="HOGENOM" id="CLU_027018_1_2_1"/>
<dbReference type="InParanoid" id="Q7L5N1"/>
<dbReference type="OMA" id="LVGWWST"/>
<dbReference type="OrthoDB" id="1378at2759"/>
<dbReference type="PAN-GO" id="Q7L5N1">
    <property type="GO annotations" value="1 GO annotation based on evolutionary models"/>
</dbReference>
<dbReference type="PhylomeDB" id="Q7L5N1"/>
<dbReference type="TreeFam" id="TF101148"/>
<dbReference type="PathwayCommons" id="Q7L5N1"/>
<dbReference type="Reactome" id="R-HSA-5696394">
    <property type="pathway name" value="DNA Damage Recognition in GG-NER"/>
</dbReference>
<dbReference type="Reactome" id="R-HSA-6781823">
    <property type="pathway name" value="Formation of TC-NER Pre-Incision Complex"/>
</dbReference>
<dbReference type="Reactome" id="R-HSA-8856825">
    <property type="pathway name" value="Cargo recognition for clathrin-mediated endocytosis"/>
</dbReference>
<dbReference type="Reactome" id="R-HSA-8951664">
    <property type="pathway name" value="Neddylation"/>
</dbReference>
<dbReference type="SignaLink" id="Q7L5N1"/>
<dbReference type="SIGNOR" id="Q7L5N1"/>
<dbReference type="BioGRID-ORCS" id="10980">
    <property type="hits" value="770 hits in 1184 CRISPR screens"/>
</dbReference>
<dbReference type="CD-CODE" id="8C2F96ED">
    <property type="entry name" value="Centrosome"/>
</dbReference>
<dbReference type="ChiTaRS" id="COPS6">
    <property type="organism name" value="human"/>
</dbReference>
<dbReference type="EvolutionaryTrace" id="Q7L5N1"/>
<dbReference type="GeneWiki" id="COPS6"/>
<dbReference type="GenomeRNAi" id="10980"/>
<dbReference type="Pharos" id="Q7L5N1">
    <property type="development level" value="Tbio"/>
</dbReference>
<dbReference type="PRO" id="PR:Q7L5N1"/>
<dbReference type="Proteomes" id="UP000005640">
    <property type="component" value="Chromosome 7"/>
</dbReference>
<dbReference type="RNAct" id="Q7L5N1">
    <property type="molecule type" value="protein"/>
</dbReference>
<dbReference type="Bgee" id="ENSG00000168090">
    <property type="expression patterns" value="Expressed in stromal cell of endometrium and 209 other cell types or tissues"/>
</dbReference>
<dbReference type="ExpressionAtlas" id="Q7L5N1">
    <property type="expression patterns" value="baseline and differential"/>
</dbReference>
<dbReference type="GO" id="GO:0008180">
    <property type="term" value="C:COP9 signalosome"/>
    <property type="evidence" value="ECO:0000314"/>
    <property type="project" value="UniProtKB"/>
</dbReference>
<dbReference type="GO" id="GO:0005737">
    <property type="term" value="C:cytoplasm"/>
    <property type="evidence" value="ECO:0000314"/>
    <property type="project" value="ComplexPortal"/>
</dbReference>
<dbReference type="GO" id="GO:0005829">
    <property type="term" value="C:cytosol"/>
    <property type="evidence" value="ECO:0000304"/>
    <property type="project" value="Reactome"/>
</dbReference>
<dbReference type="GO" id="GO:0005654">
    <property type="term" value="C:nucleoplasm"/>
    <property type="evidence" value="ECO:0000314"/>
    <property type="project" value="HPA"/>
</dbReference>
<dbReference type="GO" id="GO:0005634">
    <property type="term" value="C:nucleus"/>
    <property type="evidence" value="ECO:0000314"/>
    <property type="project" value="ComplexPortal"/>
</dbReference>
<dbReference type="GO" id="GO:0048471">
    <property type="term" value="C:perinuclear region of cytoplasm"/>
    <property type="evidence" value="ECO:0007669"/>
    <property type="project" value="UniProtKB-SubCell"/>
</dbReference>
<dbReference type="GO" id="GO:0000338">
    <property type="term" value="P:protein deneddylation"/>
    <property type="evidence" value="ECO:0000314"/>
    <property type="project" value="UniProtKB"/>
</dbReference>
<dbReference type="GO" id="GO:0045116">
    <property type="term" value="P:protein neddylation"/>
    <property type="evidence" value="ECO:0000303"/>
    <property type="project" value="ComplexPortal"/>
</dbReference>
<dbReference type="GO" id="GO:2000434">
    <property type="term" value="P:regulation of protein neddylation"/>
    <property type="evidence" value="ECO:0000303"/>
    <property type="project" value="ComplexPortal"/>
</dbReference>
<dbReference type="CDD" id="cd08063">
    <property type="entry name" value="MPN_CSN6"/>
    <property type="match status" value="1"/>
</dbReference>
<dbReference type="FunFam" id="3.40.140.10:FF:000017">
    <property type="entry name" value="COP9 signalosome complex subunit 6"/>
    <property type="match status" value="1"/>
</dbReference>
<dbReference type="Gene3D" id="3.40.140.10">
    <property type="entry name" value="Cytidine Deaminase, domain 2"/>
    <property type="match status" value="1"/>
</dbReference>
<dbReference type="InterPro" id="IPR024969">
    <property type="entry name" value="EIF3F/CSN6-like_C"/>
</dbReference>
<dbReference type="InterPro" id="IPR000555">
    <property type="entry name" value="JAMM/MPN+_dom"/>
</dbReference>
<dbReference type="InterPro" id="IPR037518">
    <property type="entry name" value="MPN"/>
</dbReference>
<dbReference type="InterPro" id="IPR033859">
    <property type="entry name" value="MPN_CSN6"/>
</dbReference>
<dbReference type="PANTHER" id="PTHR10540:SF8">
    <property type="entry name" value="COP9 SIGNALOSOME COMPLEX SUBUNIT 6"/>
    <property type="match status" value="1"/>
</dbReference>
<dbReference type="PANTHER" id="PTHR10540">
    <property type="entry name" value="EUKARYOTIC TRANSLATION INITIATION FACTOR 3 SUBUNIT F-RELATED"/>
    <property type="match status" value="1"/>
</dbReference>
<dbReference type="Pfam" id="PF01398">
    <property type="entry name" value="JAB"/>
    <property type="match status" value="1"/>
</dbReference>
<dbReference type="Pfam" id="PF13012">
    <property type="entry name" value="MitMem_reg"/>
    <property type="match status" value="1"/>
</dbReference>
<dbReference type="SMART" id="SM00232">
    <property type="entry name" value="JAB_MPN"/>
    <property type="match status" value="1"/>
</dbReference>
<dbReference type="PROSITE" id="PS50249">
    <property type="entry name" value="MPN"/>
    <property type="match status" value="1"/>
</dbReference>
<gene>
    <name type="primary">COPS6</name>
    <name type="synonym">CSN6</name>
    <name type="synonym">HVIP</name>
</gene>
<sequence length="327" mass="36163">MAAAAAAAAATNGTGGSSGMEVDAAVVPSVMACGVTGSVSVALHPLVILNISDHWIRMRSQEGRPVQVIGALIGKQEGRNIEVMNSFELLSHTVEEKIIIDKEYYYTKEEQFKQVFKELEFLGWYTTGGPPDPSDIHVHKQVCEIIESPLFLKLNPMTKHTDLPVSVFESVIDIINGEATMLFAELTYTLATEEAERIGVDHVARMTATGSGENSTVAEHLIAQHSAIKMLHSRVKLILEYVKASEAGEVPFNHEILREAYALCHCLPVLSTDKFKTDFYDQCNDVGLMAYLGTITKTCNTMNQFVNKFNVLYDRQGIGRRMRGLFF</sequence>
<accession>Q7L5N1</accession>
<accession>A4D2A3</accession>
<accession>O15387</accession>
<protein>
    <recommendedName>
        <fullName>COP9 signalosome complex subunit 6</fullName>
        <shortName>SGN6</shortName>
        <shortName>Signalosome subunit 6</shortName>
    </recommendedName>
    <alternativeName>
        <fullName>JAB1-containing signalosome subunit 6</fullName>
    </alternativeName>
    <alternativeName>
        <fullName>MOV34 homolog</fullName>
    </alternativeName>
    <alternativeName>
        <fullName>Vpr-interacting protein</fullName>
        <shortName>hVIP</shortName>
    </alternativeName>
</protein>